<accession>Q5RDL2</accession>
<name>DDX24_PONAB</name>
<proteinExistence type="evidence at transcript level"/>
<protein>
    <recommendedName>
        <fullName>ATP-dependent RNA helicase DDX24</fullName>
        <ecNumber>3.6.4.13</ecNumber>
    </recommendedName>
    <alternativeName>
        <fullName>DEAD box protein 24</fullName>
    </alternativeName>
</protein>
<sequence length="859" mass="96419">MKLKDTKSRPKQSSYGKFQTKGIKVVGKWKEVKIDPNMFADGQMDDLVCFEELTDYQLVSPAKNPSSLFSKEAPKRKAQAVSEEEEEEEGESSSPKKKIKLKKSKNVATEGTSTQKEFEVKDPELEAQGDGMVCDDPEAGEMTSENLVQTAPKKKKNKAKKGLEPSQSTAAKVPKKAKTWIPEVHDQKADVSAWKDLFVPRPVLRALSFLGFSAPTPIQVLTLAPAIRDKLDILGAAETGSGKTLAFAIPMIHAVLQWQKRNAAPPPSNTEAPPGETRPEAGAETRSPGKAEAESDALPDDTVIESEALPSDTAAEARAKTGGTVSDQALLFGDDDAGEGPSSLIREKPVPKQNENEEENLDKEQTGNLKQELDDKSATCKTYPKRPLLGLVLTPTRELAVQVKQHIDAVARFTGIKTAILVGGMSTQKQQRMLNRRPEIVVATPGRLWELIKEKHYHLRNLRQLRCLVVDEADRMVEKGHFAELSQLLEMLNDSQYNPKRQTLVFSATLTLVHQAPARILHKKHTKKMDKTAKLDLLMQKIGMRGKPKVIDLTRNEATVETLTETKIHCETDEKDFYLYYFLMQYPGRSLVFANSISCIKRLSGLLKVLDIMPLTLHACMHQKQRLRNLEQFARLEDCVLLATDVAARGLDIPKVQHVIHYQVPRTSEIYVHRSGRTARATNEGLSLMLIGPEDVINFKKIYKTLKKDEDIPLFPVQTKYMDVVKERIRLARQIEKSEYRNFQACLHNSWIEQAAAALEIELEEDMYKGGKADQQEERRRQKQMKVLKKELRHLLSQPLFTESQKTKYPTQSGKPPLLVSAPSKSESALSCLSKQRKKKTKKPKEPQPEQPQPSTSAN</sequence>
<dbReference type="EC" id="3.6.4.13"/>
<dbReference type="EMBL" id="CR857893">
    <property type="protein sequence ID" value="CAH90145.1"/>
    <property type="molecule type" value="mRNA"/>
</dbReference>
<dbReference type="RefSeq" id="NP_001125038.1">
    <property type="nucleotide sequence ID" value="NM_001131566.1"/>
</dbReference>
<dbReference type="FunCoup" id="Q5RDL2">
    <property type="interactions" value="2782"/>
</dbReference>
<dbReference type="STRING" id="9601.ENSPPYP00000006931"/>
<dbReference type="Ensembl" id="ENSPPYT00000007205.2">
    <property type="protein sequence ID" value="ENSPPYP00000006931.1"/>
    <property type="gene ID" value="ENSPPYG00000006095.2"/>
</dbReference>
<dbReference type="GeneID" id="100171919"/>
<dbReference type="KEGG" id="pon:100171919"/>
<dbReference type="CTD" id="57062"/>
<dbReference type="eggNOG" id="KOG0347">
    <property type="taxonomic scope" value="Eukaryota"/>
</dbReference>
<dbReference type="GeneTree" id="ENSGT00550000074847"/>
<dbReference type="HOGENOM" id="CLU_003041_13_1_1"/>
<dbReference type="InParanoid" id="Q5RDL2"/>
<dbReference type="OMA" id="QMIQKAR"/>
<dbReference type="OrthoDB" id="4310724at2759"/>
<dbReference type="TreeFam" id="TF105837"/>
<dbReference type="Proteomes" id="UP000001595">
    <property type="component" value="Chromosome 14"/>
</dbReference>
<dbReference type="GO" id="GO:0005737">
    <property type="term" value="C:cytoplasm"/>
    <property type="evidence" value="ECO:0007669"/>
    <property type="project" value="UniProtKB-SubCell"/>
</dbReference>
<dbReference type="GO" id="GO:0005730">
    <property type="term" value="C:nucleolus"/>
    <property type="evidence" value="ECO:0007669"/>
    <property type="project" value="Ensembl"/>
</dbReference>
<dbReference type="GO" id="GO:0005524">
    <property type="term" value="F:ATP binding"/>
    <property type="evidence" value="ECO:0007669"/>
    <property type="project" value="UniProtKB-KW"/>
</dbReference>
<dbReference type="GO" id="GO:0016887">
    <property type="term" value="F:ATP hydrolysis activity"/>
    <property type="evidence" value="ECO:0007669"/>
    <property type="project" value="RHEA"/>
</dbReference>
<dbReference type="GO" id="GO:0003723">
    <property type="term" value="F:RNA binding"/>
    <property type="evidence" value="ECO:0007669"/>
    <property type="project" value="UniProtKB-KW"/>
</dbReference>
<dbReference type="GO" id="GO:0003724">
    <property type="term" value="F:RNA helicase activity"/>
    <property type="evidence" value="ECO:0007669"/>
    <property type="project" value="UniProtKB-EC"/>
</dbReference>
<dbReference type="CDD" id="cd17946">
    <property type="entry name" value="DEADc_DDX24"/>
    <property type="match status" value="1"/>
</dbReference>
<dbReference type="CDD" id="cd18787">
    <property type="entry name" value="SF2_C_DEAD"/>
    <property type="match status" value="1"/>
</dbReference>
<dbReference type="FunFam" id="3.40.50.300:FF:001059">
    <property type="entry name" value="ATP-dependent RNA helicase DDX24"/>
    <property type="match status" value="1"/>
</dbReference>
<dbReference type="Gene3D" id="3.40.50.300">
    <property type="entry name" value="P-loop containing nucleotide triphosphate hydrolases"/>
    <property type="match status" value="2"/>
</dbReference>
<dbReference type="InterPro" id="IPR011545">
    <property type="entry name" value="DEAD/DEAH_box_helicase_dom"/>
</dbReference>
<dbReference type="InterPro" id="IPR014001">
    <property type="entry name" value="Helicase_ATP-bd"/>
</dbReference>
<dbReference type="InterPro" id="IPR001650">
    <property type="entry name" value="Helicase_C-like"/>
</dbReference>
<dbReference type="InterPro" id="IPR027417">
    <property type="entry name" value="P-loop_NTPase"/>
</dbReference>
<dbReference type="InterPro" id="IPR000629">
    <property type="entry name" value="RNA-helicase_DEAD-box_CS"/>
</dbReference>
<dbReference type="InterPro" id="IPR014014">
    <property type="entry name" value="RNA_helicase_DEAD_Q_motif"/>
</dbReference>
<dbReference type="PANTHER" id="PTHR24031">
    <property type="entry name" value="RNA HELICASE"/>
    <property type="match status" value="1"/>
</dbReference>
<dbReference type="Pfam" id="PF00270">
    <property type="entry name" value="DEAD"/>
    <property type="match status" value="1"/>
</dbReference>
<dbReference type="Pfam" id="PF00271">
    <property type="entry name" value="Helicase_C"/>
    <property type="match status" value="1"/>
</dbReference>
<dbReference type="SMART" id="SM00487">
    <property type="entry name" value="DEXDc"/>
    <property type="match status" value="1"/>
</dbReference>
<dbReference type="SMART" id="SM00490">
    <property type="entry name" value="HELICc"/>
    <property type="match status" value="1"/>
</dbReference>
<dbReference type="SUPFAM" id="SSF52540">
    <property type="entry name" value="P-loop containing nucleoside triphosphate hydrolases"/>
    <property type="match status" value="2"/>
</dbReference>
<dbReference type="PROSITE" id="PS00039">
    <property type="entry name" value="DEAD_ATP_HELICASE"/>
    <property type="match status" value="1"/>
</dbReference>
<dbReference type="PROSITE" id="PS51192">
    <property type="entry name" value="HELICASE_ATP_BIND_1"/>
    <property type="match status" value="1"/>
</dbReference>
<dbReference type="PROSITE" id="PS51194">
    <property type="entry name" value="HELICASE_CTER"/>
    <property type="match status" value="1"/>
</dbReference>
<dbReference type="PROSITE" id="PS51195">
    <property type="entry name" value="Q_MOTIF"/>
    <property type="match status" value="1"/>
</dbReference>
<gene>
    <name type="primary">DDX24</name>
</gene>
<evidence type="ECO:0000250" key="1">
    <source>
        <dbReference type="UniProtKB" id="Q9ESV0"/>
    </source>
</evidence>
<evidence type="ECO:0000250" key="2">
    <source>
        <dbReference type="UniProtKB" id="Q9GZR7"/>
    </source>
</evidence>
<evidence type="ECO:0000255" key="3">
    <source>
        <dbReference type="PROSITE-ProRule" id="PRU00541"/>
    </source>
</evidence>
<evidence type="ECO:0000255" key="4">
    <source>
        <dbReference type="PROSITE-ProRule" id="PRU00542"/>
    </source>
</evidence>
<evidence type="ECO:0000256" key="5">
    <source>
        <dbReference type="SAM" id="MobiDB-lite"/>
    </source>
</evidence>
<evidence type="ECO:0000305" key="6"/>
<organism>
    <name type="scientific">Pongo abelii</name>
    <name type="common">Sumatran orangutan</name>
    <name type="synonym">Pongo pygmaeus abelii</name>
    <dbReference type="NCBI Taxonomy" id="9601"/>
    <lineage>
        <taxon>Eukaryota</taxon>
        <taxon>Metazoa</taxon>
        <taxon>Chordata</taxon>
        <taxon>Craniata</taxon>
        <taxon>Vertebrata</taxon>
        <taxon>Euteleostomi</taxon>
        <taxon>Mammalia</taxon>
        <taxon>Eutheria</taxon>
        <taxon>Euarchontoglires</taxon>
        <taxon>Primates</taxon>
        <taxon>Haplorrhini</taxon>
        <taxon>Catarrhini</taxon>
        <taxon>Hominidae</taxon>
        <taxon>Pongo</taxon>
    </lineage>
</organism>
<keyword id="KW-0007">Acetylation</keyword>
<keyword id="KW-0067">ATP-binding</keyword>
<keyword id="KW-0963">Cytoplasm</keyword>
<keyword id="KW-0347">Helicase</keyword>
<keyword id="KW-0378">Hydrolase</keyword>
<keyword id="KW-1017">Isopeptide bond</keyword>
<keyword id="KW-0547">Nucleotide-binding</keyword>
<keyword id="KW-0539">Nucleus</keyword>
<keyword id="KW-0597">Phosphoprotein</keyword>
<keyword id="KW-1185">Reference proteome</keyword>
<keyword id="KW-0694">RNA-binding</keyword>
<keyword id="KW-0832">Ubl conjugation</keyword>
<comment type="function">
    <text evidence="1 2">ATP-dependent RNA helicase that plays a role in various aspects of RNA metabolism including pre-mRNA splicing and is thereby involved in different biological processes such as cell cycle regulation or innate immunity. Plays an inhibitory role in TP53 transcriptional activity and subsequently in TP53 controlled cell growth arrest and senescence by inhibiting its EP300 mediated acetylation. Negatively regulates cytosolic RNA-mediated innate immune signaling at least in part by affecting RIPK1/IRF7 interactions. Alternatively, possesses antiviral activity by recognizing gammaherpesvirus transcripts in the context of lytic reactivation (By similarity). Plays an essential role in cell cycle regulation in vascular smooth muscle cells by interacting with and regulating FANCA (Fanconi anemia complementation group A) mRNA (By similarity).</text>
</comment>
<comment type="catalytic activity">
    <reaction>
        <text>ATP + H2O = ADP + phosphate + H(+)</text>
        <dbReference type="Rhea" id="RHEA:13065"/>
        <dbReference type="ChEBI" id="CHEBI:15377"/>
        <dbReference type="ChEBI" id="CHEBI:15378"/>
        <dbReference type="ChEBI" id="CHEBI:30616"/>
        <dbReference type="ChEBI" id="CHEBI:43474"/>
        <dbReference type="ChEBI" id="CHEBI:456216"/>
        <dbReference type="EC" id="3.6.4.13"/>
    </reaction>
</comment>
<comment type="subunit">
    <text evidence="2">Interacts with FADD. Interacts with RIPK1; this interaction disrupts RLR signaling activation of IFN-dependent transcription factor IRF7. Interacts with NIP7. Interacts with EP300; this interaction prevents TP53 acetylation mediated by EP300.</text>
</comment>
<comment type="subcellular location">
    <subcellularLocation>
        <location evidence="2">Cytoplasm</location>
    </subcellularLocation>
    <subcellularLocation>
        <location evidence="2">Nucleus</location>
    </subcellularLocation>
</comment>
<comment type="PTM">
    <text evidence="2">Ubiquitinated by MDM2 without targeting DDX24 for proteasomal degradation. Instead, polyubiquitylated DDX24 promotes interaction with NIP7, a component of pre-rRNP processing complex, and associates with pre-rRNA molecules and pre-ribosomal particles.</text>
</comment>
<comment type="similarity">
    <text evidence="6">Belongs to the DEAD box helicase family. DDX24/MAK5 subfamily.</text>
</comment>
<feature type="chain" id="PRO_0000291857" description="ATP-dependent RNA helicase DDX24">
    <location>
        <begin position="1"/>
        <end position="859"/>
    </location>
</feature>
<feature type="domain" description="Helicase ATP-binding" evidence="3">
    <location>
        <begin position="224"/>
        <end position="528"/>
    </location>
</feature>
<feature type="domain" description="Helicase C-terminal" evidence="4">
    <location>
        <begin position="578"/>
        <end position="723"/>
    </location>
</feature>
<feature type="region of interest" description="Disordered" evidence="5">
    <location>
        <begin position="61"/>
        <end position="175"/>
    </location>
</feature>
<feature type="region of interest" description="Disordered" evidence="5">
    <location>
        <begin position="262"/>
        <end position="374"/>
    </location>
</feature>
<feature type="region of interest" description="Disordered" evidence="5">
    <location>
        <begin position="799"/>
        <end position="859"/>
    </location>
</feature>
<feature type="short sequence motif" description="Q motif">
    <location>
        <begin position="192"/>
        <end position="220"/>
    </location>
</feature>
<feature type="short sequence motif" description="DEAD box">
    <location>
        <begin position="471"/>
        <end position="474"/>
    </location>
</feature>
<feature type="compositionally biased region" description="Acidic residues" evidence="5">
    <location>
        <begin position="82"/>
        <end position="91"/>
    </location>
</feature>
<feature type="compositionally biased region" description="Basic residues" evidence="5">
    <location>
        <begin position="95"/>
        <end position="105"/>
    </location>
</feature>
<feature type="compositionally biased region" description="Polar residues" evidence="5">
    <location>
        <begin position="106"/>
        <end position="115"/>
    </location>
</feature>
<feature type="compositionally biased region" description="Basic and acidic residues" evidence="5">
    <location>
        <begin position="277"/>
        <end position="293"/>
    </location>
</feature>
<feature type="compositionally biased region" description="Acidic residues" evidence="5">
    <location>
        <begin position="294"/>
        <end position="304"/>
    </location>
</feature>
<feature type="compositionally biased region" description="Polar residues" evidence="5">
    <location>
        <begin position="799"/>
        <end position="814"/>
    </location>
</feature>
<feature type="compositionally biased region" description="Polar residues" evidence="5">
    <location>
        <begin position="823"/>
        <end position="834"/>
    </location>
</feature>
<feature type="binding site" evidence="3">
    <location>
        <begin position="237"/>
        <end position="244"/>
    </location>
    <ligand>
        <name>ATP</name>
        <dbReference type="ChEBI" id="CHEBI:30616"/>
    </ligand>
</feature>
<feature type="modified residue" description="N6-acetyllysine" evidence="2">
    <location>
        <position position="17"/>
    </location>
</feature>
<feature type="modified residue" description="Phosphoserine" evidence="2">
    <location>
        <position position="60"/>
    </location>
</feature>
<feature type="modified residue" description="N6-acetyllysine" evidence="2">
    <location>
        <position position="71"/>
    </location>
</feature>
<feature type="modified residue" description="Phosphoserine" evidence="2">
    <location>
        <position position="82"/>
    </location>
</feature>
<feature type="modified residue" description="Phosphoserine" evidence="2">
    <location>
        <position position="94"/>
    </location>
</feature>
<feature type="modified residue" description="Phosphoserine" evidence="2">
    <location>
        <position position="287"/>
    </location>
</feature>
<feature type="modified residue" description="Phosphoserine" evidence="2">
    <location>
        <position position="295"/>
    </location>
</feature>
<feature type="modified residue" description="Phosphothreonine" evidence="2">
    <location>
        <position position="302"/>
    </location>
</feature>
<feature type="cross-link" description="Glycyl lysine isopeptide (Lys-Gly) (interchain with G-Cter in SUMO2)" evidence="2">
    <location>
        <position position="370"/>
    </location>
</feature>
<feature type="cross-link" description="Glycyl lysine isopeptide (Lys-Gly) (interchain with G-Cter in SUMO2)" evidence="2">
    <location>
        <position position="624"/>
    </location>
</feature>
<feature type="cross-link" description="Glycyl lysine isopeptide (Lys-Gly) (interchain with G-Cter in SUMO2)" evidence="2">
    <location>
        <position position="808"/>
    </location>
</feature>
<feature type="cross-link" description="Glycyl lysine isopeptide (Lys-Gly) (interchain with G-Cter in SUMO2)" evidence="2">
    <location>
        <position position="825"/>
    </location>
</feature>
<reference key="1">
    <citation type="submission" date="2004-11" db="EMBL/GenBank/DDBJ databases">
        <authorList>
            <consortium name="The German cDNA consortium"/>
        </authorList>
    </citation>
    <scope>NUCLEOTIDE SEQUENCE [LARGE SCALE MRNA]</scope>
    <source>
        <tissue>Brain cortex</tissue>
    </source>
</reference>